<name>DNAE2_MYCBO</name>
<feature type="chain" id="PRO_0000103383" description="Error-prone DNA polymerase">
    <location>
        <begin position="1"/>
        <end position="1091"/>
    </location>
</feature>
<feature type="region of interest" description="Disordered" evidence="2">
    <location>
        <begin position="1"/>
        <end position="51"/>
    </location>
</feature>
<reference key="1">
    <citation type="journal article" date="2003" name="Proc. Natl. Acad. Sci. U.S.A.">
        <title>The complete genome sequence of Mycobacterium bovis.</title>
        <authorList>
            <person name="Garnier T."/>
            <person name="Eiglmeier K."/>
            <person name="Camus J.-C."/>
            <person name="Medina N."/>
            <person name="Mansoor H."/>
            <person name="Pryor M."/>
            <person name="Duthoy S."/>
            <person name="Grondin S."/>
            <person name="Lacroix C."/>
            <person name="Monsempe C."/>
            <person name="Simon S."/>
            <person name="Harris B."/>
            <person name="Atkin R."/>
            <person name="Doggett J."/>
            <person name="Mayes R."/>
            <person name="Keating L."/>
            <person name="Wheeler P.R."/>
            <person name="Parkhill J."/>
            <person name="Barrell B.G."/>
            <person name="Cole S.T."/>
            <person name="Gordon S.V."/>
            <person name="Hewinson R.G."/>
        </authorList>
    </citation>
    <scope>NUCLEOTIDE SEQUENCE [LARGE SCALE GENOMIC DNA]</scope>
    <source>
        <strain>ATCC BAA-935 / AF2122/97</strain>
    </source>
</reference>
<reference key="2">
    <citation type="journal article" date="2017" name="Genome Announc.">
        <title>Updated reference genome sequence and annotation of Mycobacterium bovis AF2122/97.</title>
        <authorList>
            <person name="Malone K.M."/>
            <person name="Farrell D."/>
            <person name="Stuber T.P."/>
            <person name="Schubert O.T."/>
            <person name="Aebersold R."/>
            <person name="Robbe-Austerman S."/>
            <person name="Gordon S.V."/>
        </authorList>
    </citation>
    <scope>NUCLEOTIDE SEQUENCE [LARGE SCALE GENOMIC DNA]</scope>
    <scope>GENOME REANNOTATION</scope>
    <source>
        <strain>ATCC BAA-935 / AF2122/97</strain>
    </source>
</reference>
<sequence length="1091" mass="117784">MGWSNGPPSWAEMERVLNGKPRHAGVPAFDADGDVPRSRKRGAYQPPGRERVGSSVAYAELHAHSAYSFLDGASTPEELVEEAARLGLCALALTDHDGLYGAVRFAEAAAELDVRTVFGAELSLGATARTERPDPPGPHLLVLARGPEGYRRLSRQLAAAHLAGGEKGKPRYDFDALTEAAGGHWHILTGCRKGHVRQALSQGGPAAAQRALADLVDRFTPSRVSIELTHHGHPLDDERNAALAGLAPRFGVGIVATTGAHFADPSRGRLAMAMAAIRARRSLDSAAGWLAPLGGAHLRSGEEMARLFAWCPEAVTAAAELGERCAFGLQLIAPRLPPFDVPDGHTEDSWLRSLVMAGARERYGPPKSAPRAYSQIEHELKVIAQLRFPGYFLVVHDITRFCRDNDILCQGRGSAANSAVCYALGVTAVDPVANELLFERFLSPARDGPPDIDIDIESDQREKVIQYVYHKYGRDYAAQVANVITYRGRSAVRDMARALGFSPGQQDAWSKQVSHWTGQADDVDGIPEQVIDLATQIRNLPRHLGIHSGGMVICDRPIADVCPVEWARMANRSVLQWDKDDCAAIGLVKFDLLGLGMLSALHYAKDLVAEHKGIEVDLARLDLSEPAVYEMLARADSVGVFQVESRAQMATLPRLKPRVFYDLVVEVALIRPGPIQGGSVHPYIRRRNGVDPVIYEHPSMAPALRKTLGVPLFQEQLMQLAVDCAGFSAAEADQLRRAMGSKRSTERMRRLRGRFYDGMRALHGAPDEVIDRIYEKLEAFANFGFPESHALSFASLVFYSAWFKLHHPAAFCAALLRAQPMGFYSPQSLVADARRHGVAVHGPCVNASLAHATCENAGTEVRLGLGAVRYLGAELAEKLVAERTANGPFTSLPDLTSRVQLSVPQVEALATAGALGCFGMSRREALWAAGAAATGRPDRLPGVGSSSHIPALPGMSELELAAADVWATGVSPDSYPTQFLRADLDAMGVLPAERLGSVSDGDRVLIAGAVTHRQRPATAQGVTFINLEDETGMVNVLCTPGVWARHRKLAHTAPALLIRGQVQNASGAITVVAERMGRLTLAVGARSRDFR</sequence>
<accession>Q7TWL9</accession>
<accession>A0A1R3Y411</accession>
<accession>X2BN20</accession>
<keyword id="KW-0963">Cytoplasm</keyword>
<keyword id="KW-0227">DNA damage</keyword>
<keyword id="KW-0234">DNA repair</keyword>
<keyword id="KW-0235">DNA replication</keyword>
<keyword id="KW-0239">DNA-directed DNA polymerase</keyword>
<keyword id="KW-0548">Nucleotidyltransferase</keyword>
<keyword id="KW-1185">Reference proteome</keyword>
<keyword id="KW-0808">Transferase</keyword>
<dbReference type="EC" id="2.7.7.7" evidence="1"/>
<dbReference type="EMBL" id="LT708304">
    <property type="protein sequence ID" value="SIU02034.1"/>
    <property type="status" value="ALT_INIT"/>
    <property type="molecule type" value="Genomic_DNA"/>
</dbReference>
<dbReference type="RefSeq" id="NP_857046.2">
    <property type="nucleotide sequence ID" value="NC_002945.3"/>
</dbReference>
<dbReference type="RefSeq" id="WP_003417885.1">
    <property type="nucleotide sequence ID" value="NC_002945.4"/>
</dbReference>
<dbReference type="SMR" id="Q7TWL9"/>
<dbReference type="KEGG" id="mbo:BQ2027_MB3405C"/>
<dbReference type="PATRIC" id="fig|233413.5.peg.3740"/>
<dbReference type="Proteomes" id="UP000001419">
    <property type="component" value="Chromosome"/>
</dbReference>
<dbReference type="GO" id="GO:0005737">
    <property type="term" value="C:cytoplasm"/>
    <property type="evidence" value="ECO:0007669"/>
    <property type="project" value="UniProtKB-SubCell"/>
</dbReference>
<dbReference type="GO" id="GO:0008408">
    <property type="term" value="F:3'-5' exonuclease activity"/>
    <property type="evidence" value="ECO:0007669"/>
    <property type="project" value="InterPro"/>
</dbReference>
<dbReference type="GO" id="GO:0003887">
    <property type="term" value="F:DNA-directed DNA polymerase activity"/>
    <property type="evidence" value="ECO:0007669"/>
    <property type="project" value="UniProtKB-UniRule"/>
</dbReference>
<dbReference type="GO" id="GO:0003676">
    <property type="term" value="F:nucleic acid binding"/>
    <property type="evidence" value="ECO:0007669"/>
    <property type="project" value="InterPro"/>
</dbReference>
<dbReference type="GO" id="GO:0006281">
    <property type="term" value="P:DNA repair"/>
    <property type="evidence" value="ECO:0007669"/>
    <property type="project" value="UniProtKB-UniRule"/>
</dbReference>
<dbReference type="GO" id="GO:0006260">
    <property type="term" value="P:DNA replication"/>
    <property type="evidence" value="ECO:0007669"/>
    <property type="project" value="UniProtKB-KW"/>
</dbReference>
<dbReference type="CDD" id="cd04485">
    <property type="entry name" value="DnaE_OBF"/>
    <property type="match status" value="1"/>
</dbReference>
<dbReference type="FunFam" id="1.10.150.870:FF:000002">
    <property type="entry name" value="Error-prone DNA polymerase"/>
    <property type="match status" value="1"/>
</dbReference>
<dbReference type="FunFam" id="3.20.20.140:FF:000150">
    <property type="entry name" value="Error-prone DNA polymerase"/>
    <property type="match status" value="1"/>
</dbReference>
<dbReference type="Gene3D" id="1.10.150.870">
    <property type="match status" value="1"/>
</dbReference>
<dbReference type="Gene3D" id="3.20.20.140">
    <property type="entry name" value="Metal-dependent hydrolases"/>
    <property type="match status" value="1"/>
</dbReference>
<dbReference type="HAMAP" id="MF_01902">
    <property type="entry name" value="DNApol_error_prone"/>
    <property type="match status" value="1"/>
</dbReference>
<dbReference type="InterPro" id="IPR011708">
    <property type="entry name" value="DNA_pol3_alpha_NTPase_dom"/>
</dbReference>
<dbReference type="InterPro" id="IPR040982">
    <property type="entry name" value="DNA_pol3_finger"/>
</dbReference>
<dbReference type="InterPro" id="IPR023073">
    <property type="entry name" value="DnaE2"/>
</dbReference>
<dbReference type="InterPro" id="IPR004805">
    <property type="entry name" value="DnaE2/DnaE/PolC"/>
</dbReference>
<dbReference type="InterPro" id="IPR029460">
    <property type="entry name" value="DNAPol_HHH"/>
</dbReference>
<dbReference type="InterPro" id="IPR004365">
    <property type="entry name" value="NA-bd_OB_tRNA"/>
</dbReference>
<dbReference type="InterPro" id="IPR004013">
    <property type="entry name" value="PHP_dom"/>
</dbReference>
<dbReference type="InterPro" id="IPR003141">
    <property type="entry name" value="Pol/His_phosphatase_N"/>
</dbReference>
<dbReference type="InterPro" id="IPR016195">
    <property type="entry name" value="Pol/histidinol_Pase-like"/>
</dbReference>
<dbReference type="NCBIfam" id="TIGR00594">
    <property type="entry name" value="polc"/>
    <property type="match status" value="1"/>
</dbReference>
<dbReference type="NCBIfam" id="NF004225">
    <property type="entry name" value="PRK05672.1"/>
    <property type="match status" value="1"/>
</dbReference>
<dbReference type="PANTHER" id="PTHR32294">
    <property type="entry name" value="DNA POLYMERASE III SUBUNIT ALPHA"/>
    <property type="match status" value="1"/>
</dbReference>
<dbReference type="PANTHER" id="PTHR32294:SF4">
    <property type="entry name" value="ERROR-PRONE DNA POLYMERASE"/>
    <property type="match status" value="1"/>
</dbReference>
<dbReference type="Pfam" id="PF07733">
    <property type="entry name" value="DNA_pol3_alpha"/>
    <property type="match status" value="1"/>
</dbReference>
<dbReference type="Pfam" id="PF17657">
    <property type="entry name" value="DNA_pol3_finger"/>
    <property type="match status" value="1"/>
</dbReference>
<dbReference type="Pfam" id="PF14579">
    <property type="entry name" value="HHH_6"/>
    <property type="match status" value="1"/>
</dbReference>
<dbReference type="Pfam" id="PF02811">
    <property type="entry name" value="PHP"/>
    <property type="match status" value="1"/>
</dbReference>
<dbReference type="Pfam" id="PF01336">
    <property type="entry name" value="tRNA_anti-codon"/>
    <property type="match status" value="1"/>
</dbReference>
<dbReference type="SMART" id="SM00481">
    <property type="entry name" value="POLIIIAc"/>
    <property type="match status" value="1"/>
</dbReference>
<dbReference type="SUPFAM" id="SSF89550">
    <property type="entry name" value="PHP domain-like"/>
    <property type="match status" value="1"/>
</dbReference>
<organism>
    <name type="scientific">Mycobacterium bovis (strain ATCC BAA-935 / AF2122/97)</name>
    <dbReference type="NCBI Taxonomy" id="233413"/>
    <lineage>
        <taxon>Bacteria</taxon>
        <taxon>Bacillati</taxon>
        <taxon>Actinomycetota</taxon>
        <taxon>Actinomycetes</taxon>
        <taxon>Mycobacteriales</taxon>
        <taxon>Mycobacteriaceae</taxon>
        <taxon>Mycobacterium</taxon>
        <taxon>Mycobacterium tuberculosis complex</taxon>
    </lineage>
</organism>
<protein>
    <recommendedName>
        <fullName evidence="1">Error-prone DNA polymerase</fullName>
        <ecNumber evidence="1">2.7.7.7</ecNumber>
    </recommendedName>
</protein>
<gene>
    <name evidence="1" type="primary">dnaE2</name>
    <name type="ordered locus">BQ2027_MB3405C</name>
</gene>
<comment type="function">
    <text evidence="1">DNA polymerase involved in damage-induced mutagenesis and translesion synthesis (TLS). It is not the major replicative DNA polymerase.</text>
</comment>
<comment type="catalytic activity">
    <reaction evidence="1">
        <text>DNA(n) + a 2'-deoxyribonucleoside 5'-triphosphate = DNA(n+1) + diphosphate</text>
        <dbReference type="Rhea" id="RHEA:22508"/>
        <dbReference type="Rhea" id="RHEA-COMP:17339"/>
        <dbReference type="Rhea" id="RHEA-COMP:17340"/>
        <dbReference type="ChEBI" id="CHEBI:33019"/>
        <dbReference type="ChEBI" id="CHEBI:61560"/>
        <dbReference type="ChEBI" id="CHEBI:173112"/>
        <dbReference type="EC" id="2.7.7.7"/>
    </reaction>
</comment>
<comment type="subcellular location">
    <subcellularLocation>
        <location evidence="1">Cytoplasm</location>
    </subcellularLocation>
</comment>
<comment type="similarity">
    <text evidence="1">Belongs to the DNA polymerase type-C family. DnaE2 subfamily.</text>
</comment>
<comment type="sequence caution" evidence="3">
    <conflict type="erroneous initiation">
        <sequence resource="EMBL-CDS" id="SIU02034"/>
    </conflict>
    <text>Truncated N-terminus.</text>
</comment>
<evidence type="ECO:0000255" key="1">
    <source>
        <dbReference type="HAMAP-Rule" id="MF_01902"/>
    </source>
</evidence>
<evidence type="ECO:0000256" key="2">
    <source>
        <dbReference type="SAM" id="MobiDB-lite"/>
    </source>
</evidence>
<evidence type="ECO:0000305" key="3"/>
<proteinExistence type="inferred from homology"/>